<dbReference type="EMBL" id="X73487">
    <property type="protein sequence ID" value="CAA51884.1"/>
    <property type="molecule type" value="Genomic_DNA"/>
</dbReference>
<dbReference type="EMBL" id="M14785">
    <property type="protein sequence ID" value="AAA42480.1"/>
    <property type="status" value="ALT_INIT"/>
    <property type="molecule type" value="Genomic_DNA"/>
</dbReference>
<dbReference type="PIR" id="B25770">
    <property type="entry name" value="UZAD12"/>
</dbReference>
<dbReference type="Proteomes" id="UP000004993">
    <property type="component" value="Genome"/>
</dbReference>
<dbReference type="GO" id="GO:0044204">
    <property type="term" value="C:host cell nuclear matrix"/>
    <property type="evidence" value="ECO:0007669"/>
    <property type="project" value="UniProtKB-SubCell"/>
</dbReference>
<dbReference type="GO" id="GO:0003690">
    <property type="term" value="F:double-stranded DNA binding"/>
    <property type="evidence" value="ECO:0007669"/>
    <property type="project" value="UniProtKB-UniRule"/>
</dbReference>
<dbReference type="GO" id="GO:0003697">
    <property type="term" value="F:single-stranded DNA binding"/>
    <property type="evidence" value="ECO:0007669"/>
    <property type="project" value="UniProtKB-UniRule"/>
</dbReference>
<dbReference type="GO" id="GO:0006260">
    <property type="term" value="P:DNA replication"/>
    <property type="evidence" value="ECO:0007669"/>
    <property type="project" value="UniProtKB-KW"/>
</dbReference>
<dbReference type="GO" id="GO:0039687">
    <property type="term" value="P:viral DNA strand displacement replication"/>
    <property type="evidence" value="ECO:0007669"/>
    <property type="project" value="UniProtKB-UniRule"/>
</dbReference>
<dbReference type="HAMAP" id="MF_04061">
    <property type="entry name" value="ADV_TERM"/>
    <property type="match status" value="1"/>
</dbReference>
<dbReference type="InterPro" id="IPR003391">
    <property type="entry name" value="Adeno_preterminal"/>
</dbReference>
<dbReference type="Pfam" id="PF02459">
    <property type="entry name" value="Adeno_terminal"/>
    <property type="match status" value="1"/>
</dbReference>
<sequence length="606" mass="69447">MRATTTAAGITWMSRYIYEYHRLMLEDLAPGAAATLGWPLYREPPPHFLVGYQYLVRTCNDYVFDSRAYSRLRYTETVQPGTQTVNWSVMTNCSYTINAGAYHRFVDVDDFATTLTQIQQAVLAERVVADLALLQPLQGYGSTHMADRGNREVEVERLMQDYYKDLGRCQSDVWGMADRLRIQQAGPKDVVLLKTIRGLKTAYFNYIISSIAQLPGTLEETKLSLPCDCDWLDAFLERFSDPVDMQTLSSLRGVPTQQIIKCIISAVSLPNAPRNASFPILHETELRGGVFELRPRENGRAVTETMRRRRGEMIERFVDRLPVRRRRRRQPPPPVVEEEIMEVEEEEQEIVPGAFQQEVRETVAELIRLLEEELTVAARNSQFFNFAVDFYEAMERLEALGDINELTLRRWILYFFVSEHVATTLNYLFQRLRNYGVFARLVELNLAQVVMRARDSEGGVVYSRVWNEIGLNAFSQLMSRISNDLAATIERAGHGDLQEEEIDQLMAEIAYQDNSGDVQEILRQAAVNDTEIDSVELSFRFKTTGPVVFTQRRQIQDINRRVVAHASQLRAQHLPLPERQADIPLPPLPAGPEPPLPPGARPRRRF</sequence>
<keyword id="KW-0190">Covalent protein-DNA linkage</keyword>
<keyword id="KW-0235">DNA replication</keyword>
<keyword id="KW-0238">DNA-binding</keyword>
<keyword id="KW-1048">Host nucleus</keyword>
<keyword id="KW-0597">Phosphoprotein</keyword>
<keyword id="KW-1185">Reference proteome</keyword>
<keyword id="KW-1194">Viral DNA replication</keyword>
<evidence type="ECO:0000255" key="1">
    <source>
        <dbReference type="HAMAP-Rule" id="MF_04061"/>
    </source>
</evidence>
<evidence type="ECO:0000256" key="2">
    <source>
        <dbReference type="SAM" id="MobiDB-lite"/>
    </source>
</evidence>
<evidence type="ECO:0000305" key="3"/>
<accession>P12541</accession>
<gene>
    <name evidence="1" type="primary">PTP</name>
</gene>
<organism>
    <name type="scientific">Human adenovirus A serotype 12</name>
    <name type="common">HAdV-12</name>
    <name type="synonym">Human adenovirus 12</name>
    <dbReference type="NCBI Taxonomy" id="28282"/>
    <lineage>
        <taxon>Viruses</taxon>
        <taxon>Varidnaviria</taxon>
        <taxon>Bamfordvirae</taxon>
        <taxon>Preplasmiviricota</taxon>
        <taxon>Tectiliviricetes</taxon>
        <taxon>Rowavirales</taxon>
        <taxon>Adenoviridae</taxon>
        <taxon>Mastadenovirus</taxon>
        <taxon>Human mastadenovirus A</taxon>
    </lineage>
</organism>
<comment type="function">
    <text evidence="1">Protein covalently bound to the viral DNA that acts as a primer for viral genomic replication by DNA strand displacement. Assembles on the viral origin of replication in an initiation complex with viral polymerase, DBP, host NFIA and host POU2F1/OCT1. During initiation, the polymerase covalently couples the first dCTP with Ser-580 of pTP. The terminal protein stimulates the template activity over 20 fold compared to protein-free templates. Neo-synthesized viral genomes are linked to two preterminal proteins, one for each 5' end. These new genomes are encapsidated in the nucleus, and during capsid maturation by viral protease, preterminal protein is first cleaved into intermediary (iTP), then into mature TP. May play a role in host nuclear matrix localization of genomic DNA.</text>
</comment>
<comment type="subunit">
    <text evidence="1">Heterodimer with the polymerase; this heterodimer binds to bp 9 to 18 of the genome. Interacts with host POU2F1; POU2F1 binds to the auxiliary sequences in the inverted terminal repeats and tethers the pTP-POL heterodimer to the origin DNA thereby participating in the assembly of the pre-initiation complex (POL-TP-DBP-NFIA-POU2F1).</text>
</comment>
<comment type="subcellular location">
    <subcellularLocation>
        <location evidence="1">Host nucleus matrix</location>
    </subcellularLocation>
</comment>
<comment type="PTM">
    <text evidence="1">Preterminal protein is used to replicate viral genome, upon genomic encapsidation it is processed first into iTP and finally into TP by adenovirus protease.</text>
</comment>
<comment type="similarity">
    <text evidence="1 3">Belongs to the adenoviridae terminal protein family.</text>
</comment>
<comment type="sequence caution" evidence="3">
    <conflict type="erroneous initiation">
        <sequence resource="EMBL-CDS" id="AAA42480"/>
    </conflict>
</comment>
<reference key="1">
    <citation type="journal article" date="1994" name="J. Virol.">
        <title>Nucleotide sequence of human adenovirus type 12 DNA: comparative functional analysis.</title>
        <authorList>
            <person name="Sprengel J."/>
            <person name="Schmitz B."/>
            <person name="Heuss-Neitzel D."/>
            <person name="Zock C."/>
            <person name="Doerfler W."/>
        </authorList>
    </citation>
    <scope>NUCLEOTIDE SEQUENCE [LARGE SCALE GENOMIC DNA]</scope>
</reference>
<reference key="2">
    <citation type="journal article" date="1986" name="Gene">
        <title>Nucleotide sequence of the genes encoded in early region 2b of human adenovirus type 12.</title>
        <authorList>
            <person name="Shu L."/>
            <person name="Hong J.S."/>
            <person name="Wei Y.-F."/>
            <person name="Engler J.A."/>
        </authorList>
    </citation>
    <scope>NUCLEOTIDE SEQUENCE [GENOMIC DNA]</scope>
</reference>
<name>TERM_ADE12</name>
<protein>
    <recommendedName>
        <fullName evidence="1">Preterminal protein</fullName>
        <shortName evidence="1">pTP</shortName>
    </recommendedName>
    <alternativeName>
        <fullName evidence="1">Bellett protein</fullName>
    </alternativeName>
    <alternativeName>
        <fullName evidence="1">Precursor terminal protein</fullName>
    </alternativeName>
    <component>
        <recommendedName>
            <fullName evidence="1">Intermediate terminal protein</fullName>
            <shortName evidence="1">iTP</shortName>
        </recommendedName>
    </component>
    <component>
        <recommendedName>
            <fullName evidence="1">Terminal protein</fullName>
            <shortName evidence="1">TP</shortName>
        </recommendedName>
    </component>
</protein>
<feature type="chain" id="PRO_0000221896" description="Preterminal protein" evidence="1">
    <location>
        <begin position="1"/>
        <end position="606"/>
    </location>
</feature>
<feature type="chain" id="PRO_0000433936" description="Intermediate terminal protein" evidence="1">
    <location>
        <begin position="141"/>
        <end position="606"/>
    </location>
</feature>
<feature type="chain" id="PRO_0000433937" description="Terminal protein" evidence="1">
    <location>
        <begin position="290"/>
        <end position="606"/>
    </location>
</feature>
<feature type="region of interest" description="Disordered" evidence="2">
    <location>
        <begin position="573"/>
        <end position="606"/>
    </location>
</feature>
<feature type="short sequence motif" description="Nuclear localization signal" evidence="1">
    <location>
        <begin position="320"/>
        <end position="329"/>
    </location>
</feature>
<feature type="compositionally biased region" description="Pro residues" evidence="2">
    <location>
        <begin position="584"/>
        <end position="600"/>
    </location>
</feature>
<feature type="site" description="Cleavage; by adenovirus protease" evidence="1">
    <location>
        <begin position="140"/>
        <end position="141"/>
    </location>
</feature>
<feature type="site" description="Cleavage; by adenovirus protease" evidence="1">
    <location>
        <begin position="289"/>
        <end position="290"/>
    </location>
</feature>
<feature type="site" description="Priming of strand displacement replication by covalently linking the first nucleotide of the new DNA chain" evidence="1">
    <location>
        <position position="515"/>
    </location>
</feature>
<feature type="modified residue" description="O-(5'-phospho-DNA)-serine" evidence="1">
    <location>
        <position position="515"/>
    </location>
</feature>
<feature type="sequence conflict" description="In Ref. 2; AAA42480." evidence="3" ref="2">
    <original>L</original>
    <variation>F</variation>
    <location>
        <position position="248"/>
    </location>
</feature>
<feature type="sequence conflict" description="In Ref. 2; AAA42480." evidence="3" ref="2">
    <original>EL</original>
    <variation>DV</variation>
    <location>
        <begin position="405"/>
        <end position="406"/>
    </location>
</feature>
<proteinExistence type="inferred from homology"/>
<organismHost>
    <name type="scientific">Homo sapiens</name>
    <name type="common">Human</name>
    <dbReference type="NCBI Taxonomy" id="9606"/>
</organismHost>